<protein>
    <recommendedName>
        <fullName evidence="1">Ribosome rescue factor SmrB</fullName>
        <ecNumber evidence="1">3.1.-.-</ecNumber>
    </recommendedName>
</protein>
<accession>Q87MM7</accession>
<dbReference type="EC" id="3.1.-.-" evidence="1"/>
<dbReference type="EMBL" id="BA000031">
    <property type="protein sequence ID" value="BAC60467.1"/>
    <property type="molecule type" value="Genomic_DNA"/>
</dbReference>
<dbReference type="RefSeq" id="NP_798583.1">
    <property type="nucleotide sequence ID" value="NC_004603.1"/>
</dbReference>
<dbReference type="RefSeq" id="WP_005457721.1">
    <property type="nucleotide sequence ID" value="NC_004603.1"/>
</dbReference>
<dbReference type="SMR" id="Q87MM7"/>
<dbReference type="GeneID" id="1189717"/>
<dbReference type="KEGG" id="vpa:VP2204"/>
<dbReference type="PATRIC" id="fig|223926.6.peg.2107"/>
<dbReference type="eggNOG" id="COG2840">
    <property type="taxonomic scope" value="Bacteria"/>
</dbReference>
<dbReference type="HOGENOM" id="CLU_055978_4_0_6"/>
<dbReference type="Proteomes" id="UP000002493">
    <property type="component" value="Chromosome 1"/>
</dbReference>
<dbReference type="GO" id="GO:0004521">
    <property type="term" value="F:RNA endonuclease activity"/>
    <property type="evidence" value="ECO:0007669"/>
    <property type="project" value="UniProtKB-UniRule"/>
</dbReference>
<dbReference type="GO" id="GO:0019843">
    <property type="term" value="F:rRNA binding"/>
    <property type="evidence" value="ECO:0007669"/>
    <property type="project" value="UniProtKB-UniRule"/>
</dbReference>
<dbReference type="GO" id="GO:0072344">
    <property type="term" value="P:rescue of stalled ribosome"/>
    <property type="evidence" value="ECO:0007669"/>
    <property type="project" value="UniProtKB-UniRule"/>
</dbReference>
<dbReference type="Gene3D" id="3.30.1370.110">
    <property type="match status" value="1"/>
</dbReference>
<dbReference type="HAMAP" id="MF_01042">
    <property type="entry name" value="SmrB"/>
    <property type="match status" value="1"/>
</dbReference>
<dbReference type="InterPro" id="IPR002625">
    <property type="entry name" value="Smr_dom"/>
</dbReference>
<dbReference type="InterPro" id="IPR036063">
    <property type="entry name" value="Smr_dom_sf"/>
</dbReference>
<dbReference type="InterPro" id="IPR022990">
    <property type="entry name" value="SmrB-like"/>
</dbReference>
<dbReference type="NCBIfam" id="NF003432">
    <property type="entry name" value="PRK04946.1"/>
    <property type="match status" value="1"/>
</dbReference>
<dbReference type="PANTHER" id="PTHR35562">
    <property type="entry name" value="DNA ENDONUCLEASE SMRA-RELATED"/>
    <property type="match status" value="1"/>
</dbReference>
<dbReference type="PANTHER" id="PTHR35562:SF1">
    <property type="entry name" value="UPF0115 PROTEIN YFCN"/>
    <property type="match status" value="1"/>
</dbReference>
<dbReference type="Pfam" id="PF01713">
    <property type="entry name" value="Smr"/>
    <property type="match status" value="1"/>
</dbReference>
<dbReference type="SMART" id="SM00463">
    <property type="entry name" value="SMR"/>
    <property type="match status" value="1"/>
</dbReference>
<dbReference type="SUPFAM" id="SSF160443">
    <property type="entry name" value="SMR domain-like"/>
    <property type="match status" value="1"/>
</dbReference>
<dbReference type="PROSITE" id="PS50828">
    <property type="entry name" value="SMR"/>
    <property type="match status" value="1"/>
</dbReference>
<feature type="chain" id="PRO_0000214564" description="Ribosome rescue factor SmrB">
    <location>
        <begin position="1"/>
        <end position="176"/>
    </location>
</feature>
<feature type="domain" description="Smr" evidence="1">
    <location>
        <begin position="97"/>
        <end position="172"/>
    </location>
</feature>
<feature type="region of interest" description="Disordered" evidence="2">
    <location>
        <begin position="29"/>
        <end position="51"/>
    </location>
</feature>
<feature type="compositionally biased region" description="Basic and acidic residues" evidence="2">
    <location>
        <begin position="39"/>
        <end position="51"/>
    </location>
</feature>
<keyword id="KW-0255">Endonuclease</keyword>
<keyword id="KW-0378">Hydrolase</keyword>
<keyword id="KW-0540">Nuclease</keyword>
<keyword id="KW-0694">RNA-binding</keyword>
<keyword id="KW-0699">rRNA-binding</keyword>
<gene>
    <name evidence="1" type="primary">smrB</name>
    <name type="ordered locus">VP2204</name>
</gene>
<comment type="function">
    <text evidence="1">Acts as a ribosome collision sensor. Detects stalled/collided disomes (pairs of ribosomes where the leading ribosome is stalled and a second ribosome has collided with it) and endonucleolytically cleaves mRNA at the 5' boundary of the stalled ribosome. Stalled/collided disomes form a new interface (primarily via the 30S subunits) that binds SmrB. Cleaved mRNA becomes available for tmRNA ligation, leading to ribosomal subunit dissociation and rescue of stalled ribosomes.</text>
</comment>
<comment type="subunit">
    <text evidence="1">Associates with collided ribosomes, but not with correctly translating polysomes.</text>
</comment>
<comment type="similarity">
    <text evidence="1">Belongs to the SmrB family.</text>
</comment>
<name>SMRB_VIBPA</name>
<proteinExistence type="inferred from homology"/>
<organism>
    <name type="scientific">Vibrio parahaemolyticus serotype O3:K6 (strain RIMD 2210633)</name>
    <dbReference type="NCBI Taxonomy" id="223926"/>
    <lineage>
        <taxon>Bacteria</taxon>
        <taxon>Pseudomonadati</taxon>
        <taxon>Pseudomonadota</taxon>
        <taxon>Gammaproteobacteria</taxon>
        <taxon>Vibrionales</taxon>
        <taxon>Vibrionaceae</taxon>
        <taxon>Vibrio</taxon>
    </lineage>
</organism>
<reference key="1">
    <citation type="journal article" date="2003" name="Lancet">
        <title>Genome sequence of Vibrio parahaemolyticus: a pathogenic mechanism distinct from that of V. cholerae.</title>
        <authorList>
            <person name="Makino K."/>
            <person name="Oshima K."/>
            <person name="Kurokawa K."/>
            <person name="Yokoyama K."/>
            <person name="Uda T."/>
            <person name="Tagomori K."/>
            <person name="Iijima Y."/>
            <person name="Najima M."/>
            <person name="Nakano M."/>
            <person name="Yamashita A."/>
            <person name="Kubota Y."/>
            <person name="Kimura S."/>
            <person name="Yasunaga T."/>
            <person name="Honda T."/>
            <person name="Shinagawa H."/>
            <person name="Hattori M."/>
            <person name="Iida T."/>
        </authorList>
    </citation>
    <scope>NUCLEOTIDE SEQUENCE [LARGE SCALE GENOMIC DNA]</scope>
    <source>
        <strain>RIMD 2210633</strain>
    </source>
</reference>
<sequence length="176" mass="20200">MSKKDTEHDDDFALFKEAVQGVKKLRQDTIIQQPKKNTKQKEIKRSNREASDSEFYFSDEFVPRLNEEGPTRYARDDVSTYEVKRLRRGVYVPDVFLDMHGMTQQEAKRELGAMIAYCVKNEIHCACVQHGIGKHILKQKAPLWLAQHPDVMAFHQAPLEFGGDGALLVLLSIPEK</sequence>
<evidence type="ECO:0000255" key="1">
    <source>
        <dbReference type="HAMAP-Rule" id="MF_01042"/>
    </source>
</evidence>
<evidence type="ECO:0000256" key="2">
    <source>
        <dbReference type="SAM" id="MobiDB-lite"/>
    </source>
</evidence>